<protein>
    <recommendedName>
        <fullName>Citrate synthase, mitochondrial</fullName>
        <ecNumber>2.3.3.1</ecNumber>
    </recommendedName>
    <alternativeName>
        <fullName>Citrate (Si)-synthase</fullName>
    </alternativeName>
</protein>
<comment type="function">
    <text evidence="5">Key enzyme of the Krebs tricarboxylic acid cycle which catalyzes the synthesis of citrate from acetyl coenzyme A and oxaloacetate.</text>
</comment>
<comment type="catalytic activity">
    <reaction evidence="4">
        <text>oxaloacetate + acetyl-CoA + H2O = citrate + CoA + H(+)</text>
        <dbReference type="Rhea" id="RHEA:16845"/>
        <dbReference type="ChEBI" id="CHEBI:15377"/>
        <dbReference type="ChEBI" id="CHEBI:15378"/>
        <dbReference type="ChEBI" id="CHEBI:16452"/>
        <dbReference type="ChEBI" id="CHEBI:16947"/>
        <dbReference type="ChEBI" id="CHEBI:57287"/>
        <dbReference type="ChEBI" id="CHEBI:57288"/>
        <dbReference type="EC" id="2.3.3.1"/>
    </reaction>
</comment>
<comment type="pathway">
    <text>Carbohydrate metabolism; tricarboxylic acid cycle; isocitrate from oxaloacetate: step 1/2.</text>
</comment>
<comment type="subunit">
    <text evidence="2">Homodimer.</text>
</comment>
<comment type="subcellular location">
    <subcellularLocation>
        <location evidence="3">Mitochondrion matrix</location>
    </subcellularLocation>
</comment>
<comment type="miscellaneous">
    <text>Citrate synthase is found in nearly all cells capable of oxidative metabolism.</text>
</comment>
<comment type="similarity">
    <text evidence="5">Belongs to the citrate synthase family.</text>
</comment>
<name>CISY_XENTR</name>
<dbReference type="EC" id="2.3.3.1"/>
<dbReference type="EMBL" id="CR855469">
    <property type="protein sequence ID" value="CAJ83375.1"/>
    <property type="molecule type" value="mRNA"/>
</dbReference>
<dbReference type="EMBL" id="BC127380">
    <property type="protein sequence ID" value="AAI27381.1"/>
    <property type="molecule type" value="mRNA"/>
</dbReference>
<dbReference type="RefSeq" id="NP_001017313.1">
    <property type="nucleotide sequence ID" value="NM_001017313.3"/>
</dbReference>
<dbReference type="SMR" id="Q28DK1"/>
<dbReference type="FunCoup" id="Q28DK1">
    <property type="interactions" value="2098"/>
</dbReference>
<dbReference type="STRING" id="8364.ENSXETP00000014746"/>
<dbReference type="PaxDb" id="8364-ENSXETP00000020990"/>
<dbReference type="DNASU" id="550067"/>
<dbReference type="GeneID" id="550067"/>
<dbReference type="KEGG" id="xtr:550067"/>
<dbReference type="AGR" id="Xenbase:XB-GENE-943160"/>
<dbReference type="CTD" id="1431"/>
<dbReference type="Xenbase" id="XB-GENE-943160">
    <property type="gene designation" value="cs"/>
</dbReference>
<dbReference type="eggNOG" id="KOG2617">
    <property type="taxonomic scope" value="Eukaryota"/>
</dbReference>
<dbReference type="HOGENOM" id="CLU_022049_2_1_1"/>
<dbReference type="InParanoid" id="Q28DK1"/>
<dbReference type="OMA" id="VLEWLFK"/>
<dbReference type="OrthoDB" id="8017587at2759"/>
<dbReference type="PhylomeDB" id="Q28DK1"/>
<dbReference type="TreeFam" id="TF300398"/>
<dbReference type="Reactome" id="R-XTR-71403">
    <property type="pathway name" value="Citric acid cycle (TCA cycle)"/>
</dbReference>
<dbReference type="Reactome" id="R-XTR-9837999">
    <property type="pathway name" value="Mitochondrial protein degradation"/>
</dbReference>
<dbReference type="UniPathway" id="UPA00223">
    <property type="reaction ID" value="UER00717"/>
</dbReference>
<dbReference type="Proteomes" id="UP000008143">
    <property type="component" value="Chromosome 2"/>
</dbReference>
<dbReference type="Bgee" id="ENSXETG00000009506">
    <property type="expression patterns" value="Expressed in skeletal muscle tissue and 17 other cell types or tissues"/>
</dbReference>
<dbReference type="ExpressionAtlas" id="Q28DK1">
    <property type="expression patterns" value="baseline"/>
</dbReference>
<dbReference type="GO" id="GO:0005759">
    <property type="term" value="C:mitochondrial matrix"/>
    <property type="evidence" value="ECO:0000250"/>
    <property type="project" value="UniProtKB"/>
</dbReference>
<dbReference type="GO" id="GO:0004108">
    <property type="term" value="F:citrate (Si)-synthase activity"/>
    <property type="evidence" value="ECO:0000250"/>
    <property type="project" value="UniProtKB"/>
</dbReference>
<dbReference type="GO" id="GO:0042802">
    <property type="term" value="F:identical protein binding"/>
    <property type="evidence" value="ECO:0000250"/>
    <property type="project" value="UniProtKB"/>
</dbReference>
<dbReference type="GO" id="GO:0005975">
    <property type="term" value="P:carbohydrate metabolic process"/>
    <property type="evidence" value="ECO:0000250"/>
    <property type="project" value="UniProtKB"/>
</dbReference>
<dbReference type="GO" id="GO:0006101">
    <property type="term" value="P:citrate metabolic process"/>
    <property type="evidence" value="ECO:0007669"/>
    <property type="project" value="InterPro"/>
</dbReference>
<dbReference type="GO" id="GO:0006099">
    <property type="term" value="P:tricarboxylic acid cycle"/>
    <property type="evidence" value="ECO:0007669"/>
    <property type="project" value="UniProtKB-UniPathway"/>
</dbReference>
<dbReference type="CDD" id="cd06105">
    <property type="entry name" value="ScCit1-2_like"/>
    <property type="match status" value="1"/>
</dbReference>
<dbReference type="FunFam" id="1.10.230.10:FF:000001">
    <property type="entry name" value="Citrate synthase"/>
    <property type="match status" value="1"/>
</dbReference>
<dbReference type="FunFam" id="1.10.580.10:FF:000001">
    <property type="entry name" value="Citrate synthase"/>
    <property type="match status" value="1"/>
</dbReference>
<dbReference type="Gene3D" id="1.10.580.10">
    <property type="entry name" value="Citrate Synthase, domain 1"/>
    <property type="match status" value="1"/>
</dbReference>
<dbReference type="Gene3D" id="1.10.230.10">
    <property type="entry name" value="Cytochrome P450-Terp, domain 2"/>
    <property type="match status" value="1"/>
</dbReference>
<dbReference type="InterPro" id="IPR016142">
    <property type="entry name" value="Citrate_synth-like_lrg_a-sub"/>
</dbReference>
<dbReference type="InterPro" id="IPR016143">
    <property type="entry name" value="Citrate_synth-like_sm_a-sub"/>
</dbReference>
<dbReference type="InterPro" id="IPR002020">
    <property type="entry name" value="Citrate_synthase"/>
</dbReference>
<dbReference type="InterPro" id="IPR019810">
    <property type="entry name" value="Citrate_synthase_AS"/>
</dbReference>
<dbReference type="InterPro" id="IPR010109">
    <property type="entry name" value="Citrate_synthase_euk"/>
</dbReference>
<dbReference type="InterPro" id="IPR036969">
    <property type="entry name" value="Citrate_synthase_sf"/>
</dbReference>
<dbReference type="NCBIfam" id="TIGR01793">
    <property type="entry name" value="cit_synth_euk"/>
    <property type="match status" value="1"/>
</dbReference>
<dbReference type="NCBIfam" id="NF007128">
    <property type="entry name" value="PRK09569.1"/>
    <property type="match status" value="1"/>
</dbReference>
<dbReference type="PANTHER" id="PTHR11739">
    <property type="entry name" value="CITRATE SYNTHASE"/>
    <property type="match status" value="1"/>
</dbReference>
<dbReference type="PANTHER" id="PTHR11739:SF8">
    <property type="entry name" value="CITRATE SYNTHASE, MITOCHONDRIAL"/>
    <property type="match status" value="1"/>
</dbReference>
<dbReference type="Pfam" id="PF00285">
    <property type="entry name" value="Citrate_synt"/>
    <property type="match status" value="1"/>
</dbReference>
<dbReference type="PRINTS" id="PR00143">
    <property type="entry name" value="CITRTSNTHASE"/>
</dbReference>
<dbReference type="SUPFAM" id="SSF48256">
    <property type="entry name" value="Citrate synthase"/>
    <property type="match status" value="1"/>
</dbReference>
<dbReference type="PROSITE" id="PS00480">
    <property type="entry name" value="CITRATE_SYNTHASE"/>
    <property type="match status" value="1"/>
</dbReference>
<feature type="transit peptide" description="Mitochondrion" evidence="1">
    <location>
        <begin position="1"/>
        <end position="30"/>
    </location>
</feature>
<feature type="chain" id="PRO_0000253910" description="Citrate synthase, mitochondrial">
    <location>
        <begin position="31"/>
        <end position="468"/>
    </location>
</feature>
<feature type="active site" evidence="4">
    <location>
        <position position="303"/>
    </location>
</feature>
<feature type="active site" evidence="4">
    <location>
        <position position="349"/>
    </location>
</feature>
<feature type="active site" evidence="4">
    <location>
        <position position="404"/>
    </location>
</feature>
<feature type="binding site" description="in chain A" evidence="2">
    <location>
        <position position="358"/>
    </location>
    <ligand>
        <name>oxaloacetate</name>
        <dbReference type="ChEBI" id="CHEBI:16452"/>
        <note>ligand shared between homodimeric partners</note>
    </ligand>
</feature>
<feature type="binding site" description="in chain A" evidence="2">
    <location>
        <position position="430"/>
    </location>
    <ligand>
        <name>oxaloacetate</name>
        <dbReference type="ChEBI" id="CHEBI:16452"/>
        <note>ligand shared between homodimeric partners</note>
    </ligand>
</feature>
<feature type="binding site" description="in chain B" evidence="2">
    <location>
        <position position="450"/>
    </location>
    <ligand>
        <name>oxaloacetate</name>
        <dbReference type="ChEBI" id="CHEBI:16452"/>
        <note>ligand shared between homodimeric partners</note>
    </ligand>
</feature>
<keyword id="KW-0496">Mitochondrion</keyword>
<keyword id="KW-1185">Reference proteome</keyword>
<keyword id="KW-0808">Transferase</keyword>
<keyword id="KW-0809">Transit peptide</keyword>
<keyword id="KW-0816">Tricarboxylic acid cycle</keyword>
<evidence type="ECO:0000250" key="1"/>
<evidence type="ECO:0000250" key="2">
    <source>
        <dbReference type="UniProtKB" id="O75390"/>
    </source>
</evidence>
<evidence type="ECO:0000250" key="3">
    <source>
        <dbReference type="UniProtKB" id="P00889"/>
    </source>
</evidence>
<evidence type="ECO:0000255" key="4">
    <source>
        <dbReference type="PROSITE-ProRule" id="PRU10117"/>
    </source>
</evidence>
<evidence type="ECO:0000305" key="5"/>
<proteinExistence type="evidence at transcript level"/>
<accession>Q28DK1</accession>
<accession>A0JPE2</accession>
<gene>
    <name type="primary">cs</name>
    <name type="ORF">TNeu053d23.1</name>
</gene>
<organism>
    <name type="scientific">Xenopus tropicalis</name>
    <name type="common">Western clawed frog</name>
    <name type="synonym">Silurana tropicalis</name>
    <dbReference type="NCBI Taxonomy" id="8364"/>
    <lineage>
        <taxon>Eukaryota</taxon>
        <taxon>Metazoa</taxon>
        <taxon>Chordata</taxon>
        <taxon>Craniata</taxon>
        <taxon>Vertebrata</taxon>
        <taxon>Euteleostomi</taxon>
        <taxon>Amphibia</taxon>
        <taxon>Batrachia</taxon>
        <taxon>Anura</taxon>
        <taxon>Pipoidea</taxon>
        <taxon>Pipidae</taxon>
        <taxon>Xenopodinae</taxon>
        <taxon>Xenopus</taxon>
        <taxon>Silurana</taxon>
    </lineage>
</organism>
<reference key="1">
    <citation type="submission" date="2006-06" db="EMBL/GenBank/DDBJ databases">
        <authorList>
            <consortium name="Sanger Xenopus tropicalis EST/cDNA project"/>
        </authorList>
    </citation>
    <scope>NUCLEOTIDE SEQUENCE [LARGE SCALE MRNA]</scope>
    <source>
        <tissue>Neurula</tissue>
    </source>
</reference>
<reference key="2">
    <citation type="submission" date="2006-11" db="EMBL/GenBank/DDBJ databases">
        <authorList>
            <consortium name="NIH - Xenopus Gene Collection (XGC) project"/>
        </authorList>
    </citation>
    <scope>NUCLEOTIDE SEQUENCE [LARGE SCALE MRNA]</scope>
    <source>
        <strain>N6</strain>
        <tissue>Skeletal muscle</tissue>
    </source>
</reference>
<sequence length="468" mass="51834">MSLITAGRLCARILGAKNSPCALIAARQASSSANLKDVLSDLIPKEQTRIKNFRQQYGKNVIGQITVDMMYGGMRGMKGLVYETSVLDPDEGIRFRGYSIPECQKLLPKAPGGEEPLPEGLFWLLVTGEAPSQEQVNWISKEWAKRAALPSHVVTMLDNFPTNLHPMSQLSAAITALNSESNFARGYAEGVNKTKYWELIYEDSMDLIAKLPCVAAKIYRNLYREGSSIGAIDSNLDWSHNFTNMLGYTDPQFTELMRLYLTIHSDHEGGNVSAHTSHLVGSALSDPYLSFSAAMNGLAGPLHGLANQEVLVWLTSLQKDLGGEVSDEKLRDYIWNTLNSGRVVPGYGHAVLRKTDPRYTCQREFALKHLPNDPMFKLVAQLYKIVPNVLLEQGKAKNPWPNVDAHSGVLLQYYGMKEMNYYTVLFGVSRALGVLAQLIWSRALGFPLERPKSMSTDGLMQLVGSKSG</sequence>